<evidence type="ECO:0000255" key="1">
    <source>
        <dbReference type="HAMAP-Rule" id="MF_00435"/>
    </source>
</evidence>
<evidence type="ECO:0000255" key="2">
    <source>
        <dbReference type="PROSITE-ProRule" id="PRU01197"/>
    </source>
</evidence>
<evidence type="ECO:0000255" key="3">
    <source>
        <dbReference type="PROSITE-ProRule" id="PRU01198"/>
    </source>
</evidence>
<evidence type="ECO:0000305" key="4"/>
<feature type="chain" id="PRO_0000226214" description="Ketol-acid reductoisomerase (NADP(+))">
    <location>
        <begin position="1"/>
        <end position="333"/>
    </location>
</feature>
<feature type="domain" description="KARI N-terminal Rossmann" evidence="2">
    <location>
        <begin position="1"/>
        <end position="171"/>
    </location>
</feature>
<feature type="domain" description="KARI C-terminal knotted" evidence="3">
    <location>
        <begin position="172"/>
        <end position="317"/>
    </location>
</feature>
<feature type="active site" evidence="1">
    <location>
        <position position="97"/>
    </location>
</feature>
<feature type="binding site" evidence="1">
    <location>
        <begin position="14"/>
        <end position="17"/>
    </location>
    <ligand>
        <name>NADP(+)</name>
        <dbReference type="ChEBI" id="CHEBI:58349"/>
    </ligand>
</feature>
<feature type="binding site" evidence="1">
    <location>
        <position position="37"/>
    </location>
    <ligand>
        <name>NADP(+)</name>
        <dbReference type="ChEBI" id="CHEBI:58349"/>
    </ligand>
</feature>
<feature type="binding site" evidence="1">
    <location>
        <position position="42"/>
    </location>
    <ligand>
        <name>NADP(+)</name>
        <dbReference type="ChEBI" id="CHEBI:58349"/>
    </ligand>
</feature>
<feature type="binding site" evidence="1">
    <location>
        <begin position="72"/>
        <end position="75"/>
    </location>
    <ligand>
        <name>NADP(+)</name>
        <dbReference type="ChEBI" id="CHEBI:58349"/>
    </ligand>
</feature>
<feature type="binding site" evidence="1">
    <location>
        <position position="123"/>
    </location>
    <ligand>
        <name>NADP(+)</name>
        <dbReference type="ChEBI" id="CHEBI:58349"/>
    </ligand>
</feature>
<feature type="binding site" evidence="1">
    <location>
        <position position="180"/>
    </location>
    <ligand>
        <name>Mg(2+)</name>
        <dbReference type="ChEBI" id="CHEBI:18420"/>
        <label>1</label>
    </ligand>
</feature>
<feature type="binding site" evidence="1">
    <location>
        <position position="180"/>
    </location>
    <ligand>
        <name>Mg(2+)</name>
        <dbReference type="ChEBI" id="CHEBI:18420"/>
        <label>2</label>
    </ligand>
</feature>
<feature type="binding site" evidence="1">
    <location>
        <position position="184"/>
    </location>
    <ligand>
        <name>Mg(2+)</name>
        <dbReference type="ChEBI" id="CHEBI:18420"/>
        <label>1</label>
    </ligand>
</feature>
<feature type="binding site" evidence="1">
    <location>
        <position position="216"/>
    </location>
    <ligand>
        <name>Mg(2+)</name>
        <dbReference type="ChEBI" id="CHEBI:18420"/>
        <label>2</label>
    </ligand>
</feature>
<feature type="binding site" evidence="1">
    <location>
        <position position="220"/>
    </location>
    <ligand>
        <name>Mg(2+)</name>
        <dbReference type="ChEBI" id="CHEBI:18420"/>
        <label>2</label>
    </ligand>
</feature>
<feature type="binding site" evidence="1">
    <location>
        <position position="241"/>
    </location>
    <ligand>
        <name>substrate</name>
    </ligand>
</feature>
<name>ILVC_XANOR</name>
<accession>Q5H4C1</accession>
<dbReference type="EC" id="1.1.1.86" evidence="1"/>
<dbReference type="EMBL" id="AE013598">
    <property type="protein sequence ID" value="AAW74200.1"/>
    <property type="status" value="ALT_INIT"/>
    <property type="molecule type" value="Genomic_DNA"/>
</dbReference>
<dbReference type="SMR" id="Q5H4C1"/>
<dbReference type="STRING" id="291331.XOO0946"/>
<dbReference type="KEGG" id="xoo:XOO0946"/>
<dbReference type="HOGENOM" id="CLU_033821_0_1_6"/>
<dbReference type="UniPathway" id="UPA00047">
    <property type="reaction ID" value="UER00056"/>
</dbReference>
<dbReference type="UniPathway" id="UPA00049">
    <property type="reaction ID" value="UER00060"/>
</dbReference>
<dbReference type="Proteomes" id="UP000006735">
    <property type="component" value="Chromosome"/>
</dbReference>
<dbReference type="GO" id="GO:0005829">
    <property type="term" value="C:cytosol"/>
    <property type="evidence" value="ECO:0007669"/>
    <property type="project" value="TreeGrafter"/>
</dbReference>
<dbReference type="GO" id="GO:0004455">
    <property type="term" value="F:ketol-acid reductoisomerase activity"/>
    <property type="evidence" value="ECO:0007669"/>
    <property type="project" value="UniProtKB-UniRule"/>
</dbReference>
<dbReference type="GO" id="GO:0000287">
    <property type="term" value="F:magnesium ion binding"/>
    <property type="evidence" value="ECO:0007669"/>
    <property type="project" value="UniProtKB-UniRule"/>
</dbReference>
<dbReference type="GO" id="GO:0050661">
    <property type="term" value="F:NADP binding"/>
    <property type="evidence" value="ECO:0007669"/>
    <property type="project" value="InterPro"/>
</dbReference>
<dbReference type="GO" id="GO:0009097">
    <property type="term" value="P:isoleucine biosynthetic process"/>
    <property type="evidence" value="ECO:0007669"/>
    <property type="project" value="UniProtKB-UniRule"/>
</dbReference>
<dbReference type="GO" id="GO:0009099">
    <property type="term" value="P:L-valine biosynthetic process"/>
    <property type="evidence" value="ECO:0007669"/>
    <property type="project" value="UniProtKB-UniRule"/>
</dbReference>
<dbReference type="FunFam" id="3.40.50.720:FF:000023">
    <property type="entry name" value="Ketol-acid reductoisomerase (NADP(+))"/>
    <property type="match status" value="1"/>
</dbReference>
<dbReference type="Gene3D" id="6.10.240.10">
    <property type="match status" value="1"/>
</dbReference>
<dbReference type="Gene3D" id="3.40.50.720">
    <property type="entry name" value="NAD(P)-binding Rossmann-like Domain"/>
    <property type="match status" value="1"/>
</dbReference>
<dbReference type="HAMAP" id="MF_00435">
    <property type="entry name" value="IlvC"/>
    <property type="match status" value="1"/>
</dbReference>
<dbReference type="InterPro" id="IPR008927">
    <property type="entry name" value="6-PGluconate_DH-like_C_sf"/>
</dbReference>
<dbReference type="InterPro" id="IPR013023">
    <property type="entry name" value="KARI"/>
</dbReference>
<dbReference type="InterPro" id="IPR000506">
    <property type="entry name" value="KARI_C"/>
</dbReference>
<dbReference type="InterPro" id="IPR013116">
    <property type="entry name" value="KARI_N"/>
</dbReference>
<dbReference type="InterPro" id="IPR014359">
    <property type="entry name" value="KARI_prok"/>
</dbReference>
<dbReference type="InterPro" id="IPR036291">
    <property type="entry name" value="NAD(P)-bd_dom_sf"/>
</dbReference>
<dbReference type="NCBIfam" id="TIGR00465">
    <property type="entry name" value="ilvC"/>
    <property type="match status" value="1"/>
</dbReference>
<dbReference type="NCBIfam" id="NF004017">
    <property type="entry name" value="PRK05479.1"/>
    <property type="match status" value="1"/>
</dbReference>
<dbReference type="PANTHER" id="PTHR21371">
    <property type="entry name" value="KETOL-ACID REDUCTOISOMERASE, MITOCHONDRIAL"/>
    <property type="match status" value="1"/>
</dbReference>
<dbReference type="PANTHER" id="PTHR21371:SF1">
    <property type="entry name" value="KETOL-ACID REDUCTOISOMERASE, MITOCHONDRIAL"/>
    <property type="match status" value="1"/>
</dbReference>
<dbReference type="Pfam" id="PF01450">
    <property type="entry name" value="KARI_C"/>
    <property type="match status" value="1"/>
</dbReference>
<dbReference type="Pfam" id="PF07991">
    <property type="entry name" value="KARI_N"/>
    <property type="match status" value="1"/>
</dbReference>
<dbReference type="PIRSF" id="PIRSF000116">
    <property type="entry name" value="IlvC_gammaproteo"/>
    <property type="match status" value="1"/>
</dbReference>
<dbReference type="SUPFAM" id="SSF48179">
    <property type="entry name" value="6-phosphogluconate dehydrogenase C-terminal domain-like"/>
    <property type="match status" value="1"/>
</dbReference>
<dbReference type="SUPFAM" id="SSF51735">
    <property type="entry name" value="NAD(P)-binding Rossmann-fold domains"/>
    <property type="match status" value="1"/>
</dbReference>
<dbReference type="PROSITE" id="PS51851">
    <property type="entry name" value="KARI_C"/>
    <property type="match status" value="1"/>
</dbReference>
<dbReference type="PROSITE" id="PS51850">
    <property type="entry name" value="KARI_N"/>
    <property type="match status" value="1"/>
</dbReference>
<protein>
    <recommendedName>
        <fullName evidence="1">Ketol-acid reductoisomerase (NADP(+))</fullName>
        <shortName evidence="1">KARI</shortName>
        <ecNumber evidence="1">1.1.1.86</ecNumber>
    </recommendedName>
    <alternativeName>
        <fullName evidence="1">Acetohydroxy-acid isomeroreductase</fullName>
        <shortName evidence="1">AHIR</shortName>
    </alternativeName>
    <alternativeName>
        <fullName evidence="1">Alpha-keto-beta-hydroxylacyl reductoisomerase</fullName>
    </alternativeName>
    <alternativeName>
        <fullName evidence="1">Ketol-acid reductoisomerase type 1</fullName>
    </alternativeName>
    <alternativeName>
        <fullName evidence="1">Ketol-acid reductoisomerase type I</fullName>
    </alternativeName>
</protein>
<keyword id="KW-0028">Amino-acid biosynthesis</keyword>
<keyword id="KW-0100">Branched-chain amino acid biosynthesis</keyword>
<keyword id="KW-0460">Magnesium</keyword>
<keyword id="KW-0479">Metal-binding</keyword>
<keyword id="KW-0521">NADP</keyword>
<keyword id="KW-0560">Oxidoreductase</keyword>
<keyword id="KW-1185">Reference proteome</keyword>
<reference key="1">
    <citation type="journal article" date="2005" name="Nucleic Acids Res.">
        <title>The genome sequence of Xanthomonas oryzae pathovar oryzae KACC10331, the bacterial blight pathogen of rice.</title>
        <authorList>
            <person name="Lee B.-M."/>
            <person name="Park Y.-J."/>
            <person name="Park D.-S."/>
            <person name="Kang H.-W."/>
            <person name="Kim J.-G."/>
            <person name="Song E.-S."/>
            <person name="Park I.-C."/>
            <person name="Yoon U.-H."/>
            <person name="Hahn J.-H."/>
            <person name="Koo B.-S."/>
            <person name="Lee G.-B."/>
            <person name="Kim H."/>
            <person name="Park H.-S."/>
            <person name="Yoon K.-O."/>
            <person name="Kim J.-H."/>
            <person name="Jung C.-H."/>
            <person name="Koh N.-H."/>
            <person name="Seo J.-S."/>
            <person name="Go S.-J."/>
        </authorList>
    </citation>
    <scope>NUCLEOTIDE SEQUENCE [LARGE SCALE GENOMIC DNA]</scope>
    <source>
        <strain>KACC10331 / KXO85</strain>
    </source>
</reference>
<sequence>MSNDTQPKIAIIGYGSQGRAHALNLRDSGFDVTVGLRPGGPTESKAQADGFTVVAPSEAVKSADLVAILTPDMVQKKLYEDVIAPNMKQGACLLFAHGLNVHFDMITPRADLDVVLVAPKGPGALVRREYEIGRGVPCIYAVYQDTSGKAEQFALTYAGGLGGARANIIKTTFKEETETDLFGEQAVLCGGASSLVQAGFEVLVEAGYQPEIAYYEVLHELKLIVDLFYEGGITRMLEFVSETAQYGDYVSGPRVIDASTKARMKDVLTDIQNGTFTKNWVAEYEAGLPNYTKFKQADLEHPIEEVGKKLRAKMVWLNGEQQAAAAPANQQAA</sequence>
<organism>
    <name type="scientific">Xanthomonas oryzae pv. oryzae (strain KACC10331 / KXO85)</name>
    <dbReference type="NCBI Taxonomy" id="291331"/>
    <lineage>
        <taxon>Bacteria</taxon>
        <taxon>Pseudomonadati</taxon>
        <taxon>Pseudomonadota</taxon>
        <taxon>Gammaproteobacteria</taxon>
        <taxon>Lysobacterales</taxon>
        <taxon>Lysobacteraceae</taxon>
        <taxon>Xanthomonas</taxon>
    </lineage>
</organism>
<proteinExistence type="inferred from homology"/>
<gene>
    <name evidence="1" type="primary">ilvC</name>
    <name type="ordered locus">XOO0946</name>
</gene>
<comment type="function">
    <text evidence="1">Involved in the biosynthesis of branched-chain amino acids (BCAA). Catalyzes an alkyl-migration followed by a ketol-acid reduction of (S)-2-acetolactate (S2AL) to yield (R)-2,3-dihydroxy-isovalerate. In the isomerase reaction, S2AL is rearranged via a Mg-dependent methyl migration to produce 3-hydroxy-3-methyl-2-ketobutyrate (HMKB). In the reductase reaction, this 2-ketoacid undergoes a metal-dependent reduction by NADPH to yield (R)-2,3-dihydroxy-isovalerate.</text>
</comment>
<comment type="catalytic activity">
    <reaction evidence="1">
        <text>(2R)-2,3-dihydroxy-3-methylbutanoate + NADP(+) = (2S)-2-acetolactate + NADPH + H(+)</text>
        <dbReference type="Rhea" id="RHEA:22068"/>
        <dbReference type="ChEBI" id="CHEBI:15378"/>
        <dbReference type="ChEBI" id="CHEBI:49072"/>
        <dbReference type="ChEBI" id="CHEBI:57783"/>
        <dbReference type="ChEBI" id="CHEBI:58349"/>
        <dbReference type="ChEBI" id="CHEBI:58476"/>
        <dbReference type="EC" id="1.1.1.86"/>
    </reaction>
</comment>
<comment type="catalytic activity">
    <reaction evidence="1">
        <text>(2R,3R)-2,3-dihydroxy-3-methylpentanoate + NADP(+) = (S)-2-ethyl-2-hydroxy-3-oxobutanoate + NADPH + H(+)</text>
        <dbReference type="Rhea" id="RHEA:13493"/>
        <dbReference type="ChEBI" id="CHEBI:15378"/>
        <dbReference type="ChEBI" id="CHEBI:49256"/>
        <dbReference type="ChEBI" id="CHEBI:49258"/>
        <dbReference type="ChEBI" id="CHEBI:57783"/>
        <dbReference type="ChEBI" id="CHEBI:58349"/>
        <dbReference type="EC" id="1.1.1.86"/>
    </reaction>
</comment>
<comment type="cofactor">
    <cofactor evidence="1">
        <name>Mg(2+)</name>
        <dbReference type="ChEBI" id="CHEBI:18420"/>
    </cofactor>
    <text evidence="1">Binds 2 magnesium ions per subunit.</text>
</comment>
<comment type="pathway">
    <text evidence="1">Amino-acid biosynthesis; L-isoleucine biosynthesis; L-isoleucine from 2-oxobutanoate: step 2/4.</text>
</comment>
<comment type="pathway">
    <text evidence="1">Amino-acid biosynthesis; L-valine biosynthesis; L-valine from pyruvate: step 2/4.</text>
</comment>
<comment type="similarity">
    <text evidence="1">Belongs to the ketol-acid reductoisomerase family.</text>
</comment>
<comment type="sequence caution" evidence="4">
    <conflict type="erroneous initiation">
        <sequence resource="EMBL-CDS" id="AAW74200"/>
    </conflict>
</comment>